<organism>
    <name type="scientific">Rubrobacter xylanophilus (strain DSM 9941 / JCM 11954 / NBRC 16129 / PRD-1)</name>
    <dbReference type="NCBI Taxonomy" id="266117"/>
    <lineage>
        <taxon>Bacteria</taxon>
        <taxon>Bacillati</taxon>
        <taxon>Actinomycetota</taxon>
        <taxon>Rubrobacteria</taxon>
        <taxon>Rubrobacterales</taxon>
        <taxon>Rubrobacteraceae</taxon>
        <taxon>Rubrobacter</taxon>
    </lineage>
</organism>
<accession>Q1AX09</accession>
<sequence>MARVGELERKTGETFVRVRLEVDGEGRADVSTGVGFLDHLLHLLAHHSGMDLEVRAEGDTWVDDHHTVEDTGLVLGRALDQALGDRSDLVRFADASVPLIEALSTAAVDLGGRSHLTCNTGPLPEKIGTFDTELFPEFLRAFTQYGRFTLHLNCHYGHNAHHKVESGVKALAVALRAAVSRRSSGTASTKGVVD</sequence>
<keyword id="KW-0028">Amino-acid biosynthesis</keyword>
<keyword id="KW-0963">Cytoplasm</keyword>
<keyword id="KW-0368">Histidine biosynthesis</keyword>
<keyword id="KW-0456">Lyase</keyword>
<keyword id="KW-1185">Reference proteome</keyword>
<protein>
    <recommendedName>
        <fullName evidence="1">Imidazoleglycerol-phosphate dehydratase</fullName>
        <shortName evidence="1">IGPD</shortName>
        <ecNumber evidence="1">4.2.1.19</ecNumber>
    </recommendedName>
</protein>
<reference key="1">
    <citation type="submission" date="2006-06" db="EMBL/GenBank/DDBJ databases">
        <title>Complete sequence of Rubrobacter xylanophilus DSM 9941.</title>
        <authorList>
            <consortium name="US DOE Joint Genome Institute"/>
            <person name="Copeland A."/>
            <person name="Lucas S."/>
            <person name="Lapidus A."/>
            <person name="Barry K."/>
            <person name="Detter J.C."/>
            <person name="Glavina del Rio T."/>
            <person name="Hammon N."/>
            <person name="Israni S."/>
            <person name="Dalin E."/>
            <person name="Tice H."/>
            <person name="Pitluck S."/>
            <person name="Munk A.C."/>
            <person name="Brettin T."/>
            <person name="Bruce D."/>
            <person name="Han C."/>
            <person name="Tapia R."/>
            <person name="Gilna P."/>
            <person name="Schmutz J."/>
            <person name="Larimer F."/>
            <person name="Land M."/>
            <person name="Hauser L."/>
            <person name="Kyrpides N."/>
            <person name="Lykidis A."/>
            <person name="da Costa M.S."/>
            <person name="Rainey F.A."/>
            <person name="Empadinhas N."/>
            <person name="Jolivet E."/>
            <person name="Battista J.R."/>
            <person name="Richardson P."/>
        </authorList>
    </citation>
    <scope>NUCLEOTIDE SEQUENCE [LARGE SCALE GENOMIC DNA]</scope>
    <source>
        <strain>DSM 9941 / JCM 11954 / NBRC 16129 / PRD-1</strain>
    </source>
</reference>
<proteinExistence type="inferred from homology"/>
<evidence type="ECO:0000255" key="1">
    <source>
        <dbReference type="HAMAP-Rule" id="MF_00076"/>
    </source>
</evidence>
<name>HIS7_RUBXD</name>
<gene>
    <name evidence="1" type="primary">hisB</name>
    <name type="ordered locus">Rxyl_1103</name>
</gene>
<feature type="chain" id="PRO_0000336343" description="Imidazoleglycerol-phosphate dehydratase">
    <location>
        <begin position="1"/>
        <end position="194"/>
    </location>
</feature>
<comment type="catalytic activity">
    <reaction evidence="1">
        <text>D-erythro-1-(imidazol-4-yl)glycerol 3-phosphate = 3-(imidazol-4-yl)-2-oxopropyl phosphate + H2O</text>
        <dbReference type="Rhea" id="RHEA:11040"/>
        <dbReference type="ChEBI" id="CHEBI:15377"/>
        <dbReference type="ChEBI" id="CHEBI:57766"/>
        <dbReference type="ChEBI" id="CHEBI:58278"/>
        <dbReference type="EC" id="4.2.1.19"/>
    </reaction>
</comment>
<comment type="pathway">
    <text evidence="1">Amino-acid biosynthesis; L-histidine biosynthesis; L-histidine from 5-phospho-alpha-D-ribose 1-diphosphate: step 6/9.</text>
</comment>
<comment type="subcellular location">
    <subcellularLocation>
        <location evidence="1">Cytoplasm</location>
    </subcellularLocation>
</comment>
<comment type="similarity">
    <text evidence="1">Belongs to the imidazoleglycerol-phosphate dehydratase family.</text>
</comment>
<dbReference type="EC" id="4.2.1.19" evidence="1"/>
<dbReference type="EMBL" id="CP000386">
    <property type="protein sequence ID" value="ABG04069.1"/>
    <property type="molecule type" value="Genomic_DNA"/>
</dbReference>
<dbReference type="RefSeq" id="WP_011564087.1">
    <property type="nucleotide sequence ID" value="NC_008148.1"/>
</dbReference>
<dbReference type="SMR" id="Q1AX09"/>
<dbReference type="STRING" id="266117.Rxyl_1103"/>
<dbReference type="KEGG" id="rxy:Rxyl_1103"/>
<dbReference type="eggNOG" id="COG0131">
    <property type="taxonomic scope" value="Bacteria"/>
</dbReference>
<dbReference type="HOGENOM" id="CLU_044308_2_0_11"/>
<dbReference type="OrthoDB" id="9790411at2"/>
<dbReference type="PhylomeDB" id="Q1AX09"/>
<dbReference type="UniPathway" id="UPA00031">
    <property type="reaction ID" value="UER00011"/>
</dbReference>
<dbReference type="Proteomes" id="UP000006637">
    <property type="component" value="Chromosome"/>
</dbReference>
<dbReference type="GO" id="GO:0005737">
    <property type="term" value="C:cytoplasm"/>
    <property type="evidence" value="ECO:0007669"/>
    <property type="project" value="UniProtKB-SubCell"/>
</dbReference>
<dbReference type="GO" id="GO:0004424">
    <property type="term" value="F:imidazoleglycerol-phosphate dehydratase activity"/>
    <property type="evidence" value="ECO:0007669"/>
    <property type="project" value="UniProtKB-UniRule"/>
</dbReference>
<dbReference type="GO" id="GO:0000105">
    <property type="term" value="P:L-histidine biosynthetic process"/>
    <property type="evidence" value="ECO:0007669"/>
    <property type="project" value="UniProtKB-UniRule"/>
</dbReference>
<dbReference type="CDD" id="cd07914">
    <property type="entry name" value="IGPD"/>
    <property type="match status" value="1"/>
</dbReference>
<dbReference type="FunFam" id="3.30.230.40:FF:000001">
    <property type="entry name" value="Imidazoleglycerol-phosphate dehydratase HisB"/>
    <property type="match status" value="1"/>
</dbReference>
<dbReference type="FunFam" id="3.30.230.40:FF:000003">
    <property type="entry name" value="Imidazoleglycerol-phosphate dehydratase HisB"/>
    <property type="match status" value="1"/>
</dbReference>
<dbReference type="Gene3D" id="3.30.230.40">
    <property type="entry name" value="Imidazole glycerol phosphate dehydratase, domain 1"/>
    <property type="match status" value="2"/>
</dbReference>
<dbReference type="HAMAP" id="MF_00076">
    <property type="entry name" value="HisB"/>
    <property type="match status" value="1"/>
</dbReference>
<dbReference type="InterPro" id="IPR038494">
    <property type="entry name" value="IGPD_sf"/>
</dbReference>
<dbReference type="InterPro" id="IPR000807">
    <property type="entry name" value="ImidazoleglycerolP_deHydtase"/>
</dbReference>
<dbReference type="InterPro" id="IPR020565">
    <property type="entry name" value="ImidazoleglycerP_deHydtase_CS"/>
</dbReference>
<dbReference type="InterPro" id="IPR020568">
    <property type="entry name" value="Ribosomal_Su5_D2-typ_SF"/>
</dbReference>
<dbReference type="NCBIfam" id="NF002114">
    <property type="entry name" value="PRK00951.2-4"/>
    <property type="match status" value="1"/>
</dbReference>
<dbReference type="PANTHER" id="PTHR23133:SF2">
    <property type="entry name" value="IMIDAZOLEGLYCEROL-PHOSPHATE DEHYDRATASE"/>
    <property type="match status" value="1"/>
</dbReference>
<dbReference type="PANTHER" id="PTHR23133">
    <property type="entry name" value="IMIDAZOLEGLYCEROL-PHOSPHATE DEHYDRATASE HIS7"/>
    <property type="match status" value="1"/>
</dbReference>
<dbReference type="Pfam" id="PF00475">
    <property type="entry name" value="IGPD"/>
    <property type="match status" value="1"/>
</dbReference>
<dbReference type="SUPFAM" id="SSF54211">
    <property type="entry name" value="Ribosomal protein S5 domain 2-like"/>
    <property type="match status" value="2"/>
</dbReference>
<dbReference type="PROSITE" id="PS00954">
    <property type="entry name" value="IGP_DEHYDRATASE_1"/>
    <property type="match status" value="1"/>
</dbReference>
<dbReference type="PROSITE" id="PS00955">
    <property type="entry name" value="IGP_DEHYDRATASE_2"/>
    <property type="match status" value="1"/>
</dbReference>